<feature type="chain" id="PRO_0000287326" description="L-threonine dehydratase catabolic TdcB">
    <location>
        <begin position="1"/>
        <end position="346"/>
    </location>
</feature>
<feature type="binding site" evidence="1">
    <location>
        <begin position="59"/>
        <end position="60"/>
    </location>
    <ligand>
        <name>AMP</name>
        <dbReference type="ChEBI" id="CHEBI:456215"/>
    </ligand>
</feature>
<feature type="binding site" evidence="1">
    <location>
        <position position="94"/>
    </location>
    <ligand>
        <name>AMP</name>
        <dbReference type="ChEBI" id="CHEBI:456215"/>
    </ligand>
</feature>
<feature type="binding site" evidence="1">
    <location>
        <begin position="125"/>
        <end position="126"/>
    </location>
    <ligand>
        <name>AMP</name>
        <dbReference type="ChEBI" id="CHEBI:456215"/>
    </ligand>
</feature>
<feature type="binding site" evidence="1">
    <location>
        <position position="321"/>
    </location>
    <ligand>
        <name>AMP</name>
        <dbReference type="ChEBI" id="CHEBI:456215"/>
    </ligand>
</feature>
<feature type="modified residue" description="N6-(pyridoxal phosphate)lysine" evidence="1">
    <location>
        <position position="64"/>
    </location>
</feature>
<comment type="function">
    <text evidence="1">Catalyzes the anaerobic formation of alpha-ketobutyrate and ammonia from threonine in a two-step reaction. The first step involved a dehydration of threonine and a production of enamine intermediates (aminocrotonate), which tautomerizes to its imine form (iminobutyrate). Both intermediates are unstable and short-lived. The second step is the nonenzymatic hydrolysis of the enamine/imine intermediates to form 2-ketobutyrate and free ammonia. In the low water environment of the cell, the second step is accelerated by RidA (By similarity).</text>
</comment>
<comment type="catalytic activity">
    <reaction>
        <text>L-threonine = 2-oxobutanoate + NH4(+)</text>
        <dbReference type="Rhea" id="RHEA:22108"/>
        <dbReference type="ChEBI" id="CHEBI:16763"/>
        <dbReference type="ChEBI" id="CHEBI:28938"/>
        <dbReference type="ChEBI" id="CHEBI:57926"/>
        <dbReference type="EC" id="4.3.1.19"/>
    </reaction>
</comment>
<comment type="cofactor">
    <cofactor evidence="1">
        <name>pyridoxal 5'-phosphate</name>
        <dbReference type="ChEBI" id="CHEBI:597326"/>
    </cofactor>
</comment>
<comment type="activity regulation">
    <text evidence="1">Each protein molecule can bind up to four molecules of AMP, which act as an allosteric activator to the enzyme.</text>
</comment>
<comment type="pathway">
    <text>Amino-acid degradation; L-threonine degradation via propanoate pathway; propanoate from L-threonine: step 1/4.</text>
</comment>
<comment type="subunit">
    <text evidence="1">In the native structure, TdcB is in a dimeric form, whereas in the TdcB-AMP complex, it exists in a tetrameric form (dimer of dimers).</text>
</comment>
<comment type="similarity">
    <text evidence="2">Belongs to the serine/threonine dehydratase family.</text>
</comment>
<comment type="sequence caution" evidence="2">
    <conflict type="erroneous termination">
        <sequence resource="EMBL-CDS" id="CAI80992"/>
    </conflict>
    <text>Truncated C-terminus.</text>
</comment>
<gene>
    <name type="primary">tdcB</name>
    <name type="ordered locus">SAB1303c</name>
</gene>
<proteinExistence type="inferred from homology"/>
<organism>
    <name type="scientific">Staphylococcus aureus (strain bovine RF122 / ET3-1)</name>
    <dbReference type="NCBI Taxonomy" id="273036"/>
    <lineage>
        <taxon>Bacteria</taxon>
        <taxon>Bacillati</taxon>
        <taxon>Bacillota</taxon>
        <taxon>Bacilli</taxon>
        <taxon>Bacillales</taxon>
        <taxon>Staphylococcaceae</taxon>
        <taxon>Staphylococcus</taxon>
    </lineage>
</organism>
<keyword id="KW-0021">Allosteric enzyme</keyword>
<keyword id="KW-0456">Lyase</keyword>
<keyword id="KW-0547">Nucleotide-binding</keyword>
<keyword id="KW-0663">Pyridoxal phosphate</keyword>
<evidence type="ECO:0000250" key="1"/>
<evidence type="ECO:0000305" key="2"/>
<reference key="1">
    <citation type="journal article" date="2007" name="PLoS ONE">
        <title>Molecular correlates of host specialization in Staphylococcus aureus.</title>
        <authorList>
            <person name="Herron-Olson L."/>
            <person name="Fitzgerald J.R."/>
            <person name="Musser J.M."/>
            <person name="Kapur V."/>
        </authorList>
    </citation>
    <scope>NUCLEOTIDE SEQUENCE [LARGE SCALE GENOMIC DNA]</scope>
    <source>
        <strain>bovine RF122 / ET3-1</strain>
    </source>
</reference>
<protein>
    <recommendedName>
        <fullName>L-threonine dehydratase catabolic TdcB</fullName>
        <ecNumber>4.3.1.19</ecNumber>
    </recommendedName>
    <alternativeName>
        <fullName>Threonine deaminase</fullName>
    </alternativeName>
</protein>
<dbReference type="EC" id="4.3.1.19"/>
<dbReference type="EMBL" id="AJ938182">
    <property type="protein sequence ID" value="CAI80992.1"/>
    <property type="status" value="ALT_SEQ"/>
    <property type="molecule type" value="Genomic_DNA"/>
</dbReference>
<dbReference type="SMR" id="Q2YY67"/>
<dbReference type="KEGG" id="sab:SAB1303c"/>
<dbReference type="HOGENOM" id="CLU_021152_4_2_9"/>
<dbReference type="UniPathway" id="UPA00052">
    <property type="reaction ID" value="UER00507"/>
</dbReference>
<dbReference type="GO" id="GO:0003941">
    <property type="term" value="F:L-serine ammonia-lyase activity"/>
    <property type="evidence" value="ECO:0007669"/>
    <property type="project" value="TreeGrafter"/>
</dbReference>
<dbReference type="GO" id="GO:0000166">
    <property type="term" value="F:nucleotide binding"/>
    <property type="evidence" value="ECO:0007669"/>
    <property type="project" value="UniProtKB-KW"/>
</dbReference>
<dbReference type="GO" id="GO:0030170">
    <property type="term" value="F:pyridoxal phosphate binding"/>
    <property type="evidence" value="ECO:0007669"/>
    <property type="project" value="InterPro"/>
</dbReference>
<dbReference type="GO" id="GO:0004794">
    <property type="term" value="F:threonine deaminase activity"/>
    <property type="evidence" value="ECO:0007669"/>
    <property type="project" value="UniProtKB-EC"/>
</dbReference>
<dbReference type="GO" id="GO:0009097">
    <property type="term" value="P:isoleucine biosynthetic process"/>
    <property type="evidence" value="ECO:0007669"/>
    <property type="project" value="TreeGrafter"/>
</dbReference>
<dbReference type="GO" id="GO:0006565">
    <property type="term" value="P:L-serine catabolic process"/>
    <property type="evidence" value="ECO:0007669"/>
    <property type="project" value="TreeGrafter"/>
</dbReference>
<dbReference type="GO" id="GO:0070689">
    <property type="term" value="P:L-threonine catabolic process to propionate"/>
    <property type="evidence" value="ECO:0007669"/>
    <property type="project" value="UniProtKB-UniPathway"/>
</dbReference>
<dbReference type="CDD" id="cd01562">
    <property type="entry name" value="Thr-dehyd"/>
    <property type="match status" value="1"/>
</dbReference>
<dbReference type="FunFam" id="3.40.50.1100:FF:000007">
    <property type="entry name" value="L-threonine dehydratase catabolic TdcB"/>
    <property type="match status" value="1"/>
</dbReference>
<dbReference type="Gene3D" id="3.40.50.1100">
    <property type="match status" value="2"/>
</dbReference>
<dbReference type="InterPro" id="IPR050147">
    <property type="entry name" value="Ser/Thr_Dehydratase"/>
</dbReference>
<dbReference type="InterPro" id="IPR000634">
    <property type="entry name" value="Ser/Thr_deHydtase_PyrdxlP-BS"/>
</dbReference>
<dbReference type="InterPro" id="IPR005789">
    <property type="entry name" value="Thr_deHydtase_catblc"/>
</dbReference>
<dbReference type="InterPro" id="IPR001926">
    <property type="entry name" value="TrpB-like_PALP"/>
</dbReference>
<dbReference type="InterPro" id="IPR036052">
    <property type="entry name" value="TrpB-like_PALP_sf"/>
</dbReference>
<dbReference type="NCBIfam" id="TIGR01127">
    <property type="entry name" value="ilvA_1Cterm"/>
    <property type="match status" value="1"/>
</dbReference>
<dbReference type="NCBIfam" id="NF006389">
    <property type="entry name" value="PRK08638.1"/>
    <property type="match status" value="1"/>
</dbReference>
<dbReference type="PANTHER" id="PTHR48078:SF6">
    <property type="entry name" value="L-THREONINE DEHYDRATASE CATABOLIC TDCB"/>
    <property type="match status" value="1"/>
</dbReference>
<dbReference type="PANTHER" id="PTHR48078">
    <property type="entry name" value="THREONINE DEHYDRATASE, MITOCHONDRIAL-RELATED"/>
    <property type="match status" value="1"/>
</dbReference>
<dbReference type="Pfam" id="PF00291">
    <property type="entry name" value="PALP"/>
    <property type="match status" value="1"/>
</dbReference>
<dbReference type="SUPFAM" id="SSF53686">
    <property type="entry name" value="Tryptophan synthase beta subunit-like PLP-dependent enzymes"/>
    <property type="match status" value="1"/>
</dbReference>
<dbReference type="PROSITE" id="PS00165">
    <property type="entry name" value="DEHYDRATASE_SER_THR"/>
    <property type="match status" value="1"/>
</dbReference>
<accession>Q2YY67</accession>
<sequence length="346" mass="37348">MTTNTVTLQTAHIVSLGDIEEAKASIKPFIRRTPLIKSMYLSQSITKGNVFLKLENMQFTGSFKFRGASNKINHLTDEQKEKGIIAASAGNHAQGVALTAKLLGIDATIVMPETAPQAKQQATKGYGTKVILKGKNFNETRLYMEELAKENGMTIVHPYDDKFVMAGQGTIGLEILDDIWNVNTVIVPVGGGGLIAGIATALKSFNPSIHIIGVQSENVHGMAESFYKRDLTEHRVDSTIADGCDVKVPGEQTYEVVKHLVDEFILVIEEEIEHAMKDLMQRAKIITEGAGALPTAAILSGKINNKWLEDKNVVALVSGGNVDLTRVSGVIEHGLNIADTSKGVVG</sequence>
<name>TDCB_STAAB</name>